<organism>
    <name type="scientific">Helicobacter acinonychis (strain Sheeba)</name>
    <dbReference type="NCBI Taxonomy" id="382638"/>
    <lineage>
        <taxon>Bacteria</taxon>
        <taxon>Pseudomonadati</taxon>
        <taxon>Campylobacterota</taxon>
        <taxon>Epsilonproteobacteria</taxon>
        <taxon>Campylobacterales</taxon>
        <taxon>Helicobacteraceae</taxon>
        <taxon>Helicobacter</taxon>
    </lineage>
</organism>
<feature type="chain" id="PRO_1000052893" description="Large ribosomal subunit protein bL25">
    <location>
        <begin position="1"/>
        <end position="178"/>
    </location>
</feature>
<evidence type="ECO:0000255" key="1">
    <source>
        <dbReference type="HAMAP-Rule" id="MF_01334"/>
    </source>
</evidence>
<evidence type="ECO:0000305" key="2"/>
<keyword id="KW-0687">Ribonucleoprotein</keyword>
<keyword id="KW-0689">Ribosomal protein</keyword>
<keyword id="KW-0694">RNA-binding</keyword>
<keyword id="KW-0699">rRNA-binding</keyword>
<comment type="function">
    <text evidence="1">This is one of the proteins that binds to the 5S RNA in the ribosome where it forms part of the central protuberance.</text>
</comment>
<comment type="subunit">
    <text evidence="1">Part of the 50S ribosomal subunit; part of the 5S rRNA/L5/L18/L25 subcomplex. Contacts the 5S rRNA. Binds to the 5S rRNA independently of L5 and L18.</text>
</comment>
<comment type="similarity">
    <text evidence="1">Belongs to the bacterial ribosomal protein bL25 family. CTC subfamily.</text>
</comment>
<protein>
    <recommendedName>
        <fullName evidence="1">Large ribosomal subunit protein bL25</fullName>
    </recommendedName>
    <alternativeName>
        <fullName evidence="2">50S ribosomal protein L25</fullName>
    </alternativeName>
    <alternativeName>
        <fullName evidence="1">General stress protein CTC</fullName>
    </alternativeName>
</protein>
<gene>
    <name evidence="1" type="primary">rplY</name>
    <name evidence="1" type="synonym">ctc</name>
    <name type="ordered locus">Hac_1756</name>
</gene>
<reference key="1">
    <citation type="journal article" date="2006" name="PLoS Genet.">
        <title>Who ate whom? Adaptive Helicobacter genomic changes that accompanied a host jump from early humans to large felines.</title>
        <authorList>
            <person name="Eppinger M."/>
            <person name="Baar C."/>
            <person name="Linz B."/>
            <person name="Raddatz G."/>
            <person name="Lanz C."/>
            <person name="Keller H."/>
            <person name="Morelli G."/>
            <person name="Gressmann H."/>
            <person name="Achtman M."/>
            <person name="Schuster S.C."/>
        </authorList>
    </citation>
    <scope>NUCLEOTIDE SEQUENCE [LARGE SCALE GENOMIC DNA]</scope>
    <source>
        <strain>Sheeba</strain>
    </source>
</reference>
<dbReference type="EMBL" id="AM260522">
    <property type="protein sequence ID" value="CAK00452.1"/>
    <property type="molecule type" value="Genomic_DNA"/>
</dbReference>
<dbReference type="RefSeq" id="WP_011578534.1">
    <property type="nucleotide sequence ID" value="NC_008229.1"/>
</dbReference>
<dbReference type="SMR" id="Q17V74"/>
<dbReference type="STRING" id="382638.Hac_1756"/>
<dbReference type="GeneID" id="31758991"/>
<dbReference type="KEGG" id="hac:Hac_1756"/>
<dbReference type="eggNOG" id="COG1825">
    <property type="taxonomic scope" value="Bacteria"/>
</dbReference>
<dbReference type="HOGENOM" id="CLU_075939_2_2_7"/>
<dbReference type="OrthoDB" id="5339138at2"/>
<dbReference type="BioCyc" id="HACI382638:HAC_RS07470-MONOMER"/>
<dbReference type="Proteomes" id="UP000000775">
    <property type="component" value="Chromosome"/>
</dbReference>
<dbReference type="GO" id="GO:0022625">
    <property type="term" value="C:cytosolic large ribosomal subunit"/>
    <property type="evidence" value="ECO:0007669"/>
    <property type="project" value="TreeGrafter"/>
</dbReference>
<dbReference type="GO" id="GO:0008097">
    <property type="term" value="F:5S rRNA binding"/>
    <property type="evidence" value="ECO:0007669"/>
    <property type="project" value="InterPro"/>
</dbReference>
<dbReference type="GO" id="GO:0003735">
    <property type="term" value="F:structural constituent of ribosome"/>
    <property type="evidence" value="ECO:0007669"/>
    <property type="project" value="InterPro"/>
</dbReference>
<dbReference type="GO" id="GO:0006412">
    <property type="term" value="P:translation"/>
    <property type="evidence" value="ECO:0007669"/>
    <property type="project" value="UniProtKB-UniRule"/>
</dbReference>
<dbReference type="CDD" id="cd00495">
    <property type="entry name" value="Ribosomal_L25_TL5_CTC"/>
    <property type="match status" value="1"/>
</dbReference>
<dbReference type="Gene3D" id="2.170.120.20">
    <property type="entry name" value="Ribosomal protein L25, beta domain"/>
    <property type="match status" value="1"/>
</dbReference>
<dbReference type="Gene3D" id="2.40.240.10">
    <property type="entry name" value="Ribosomal Protein L25, Chain P"/>
    <property type="match status" value="1"/>
</dbReference>
<dbReference type="HAMAP" id="MF_01334">
    <property type="entry name" value="Ribosomal_bL25_CTC"/>
    <property type="match status" value="1"/>
</dbReference>
<dbReference type="InterPro" id="IPR020056">
    <property type="entry name" value="Rbsml_bL25/Gln-tRNA_synth_N"/>
</dbReference>
<dbReference type="InterPro" id="IPR011035">
    <property type="entry name" value="Ribosomal_bL25/Gln-tRNA_synth"/>
</dbReference>
<dbReference type="InterPro" id="IPR020057">
    <property type="entry name" value="Ribosomal_bL25_b-dom"/>
</dbReference>
<dbReference type="InterPro" id="IPR037121">
    <property type="entry name" value="Ribosomal_bL25_C"/>
</dbReference>
<dbReference type="InterPro" id="IPR001021">
    <property type="entry name" value="Ribosomal_bL25_long"/>
</dbReference>
<dbReference type="InterPro" id="IPR029751">
    <property type="entry name" value="Ribosomal_L25_dom"/>
</dbReference>
<dbReference type="InterPro" id="IPR020930">
    <property type="entry name" value="Ribosomal_uL5_bac-type"/>
</dbReference>
<dbReference type="NCBIfam" id="TIGR00731">
    <property type="entry name" value="bL25_bact_ctc"/>
    <property type="match status" value="1"/>
</dbReference>
<dbReference type="NCBIfam" id="NF004129">
    <property type="entry name" value="PRK05618.1-4"/>
    <property type="match status" value="1"/>
</dbReference>
<dbReference type="PANTHER" id="PTHR33284">
    <property type="entry name" value="RIBOSOMAL PROTEIN L25/GLN-TRNA SYNTHETASE, ANTI-CODON-BINDING DOMAIN-CONTAINING PROTEIN"/>
    <property type="match status" value="1"/>
</dbReference>
<dbReference type="PANTHER" id="PTHR33284:SF1">
    <property type="entry name" value="RIBOSOMAL PROTEIN L25_GLN-TRNA SYNTHETASE, ANTI-CODON-BINDING DOMAIN-CONTAINING PROTEIN"/>
    <property type="match status" value="1"/>
</dbReference>
<dbReference type="Pfam" id="PF01386">
    <property type="entry name" value="Ribosomal_L25p"/>
    <property type="match status" value="1"/>
</dbReference>
<dbReference type="Pfam" id="PF14693">
    <property type="entry name" value="Ribosomal_TL5_C"/>
    <property type="match status" value="1"/>
</dbReference>
<dbReference type="SUPFAM" id="SSF50715">
    <property type="entry name" value="Ribosomal protein L25-like"/>
    <property type="match status" value="1"/>
</dbReference>
<accession>Q17V74</accession>
<sequence length="178" mass="19896">MLEGVIRESITKANAKALKKDGYLIANVYGKGVENVSCAFKLNPFIKYLKEKKHLIFPVKLGDKTFEVVVQEYQKNPVTNELIHVDLLAVTKGVKSKFKVPVKYQGTPVGLKNKGILMLSKKRISVECAPEHLPNHYLVDVAPLDVNESILVRDLEKHENVKILDHDSIAVIGVIKAK</sequence>
<name>RL25_HELAH</name>
<proteinExistence type="inferred from homology"/>